<gene>
    <name type="primary">N4BP2L1</name>
    <name type="synonym">CG081</name>
</gene>
<accession>Q5TBK1</accession>
<accession>A4QN21</accession>
<accession>Q5TBK0</accession>
<comment type="function">
    <text evidence="1">Might play a role in adipocyte differentiation and triglyceride accumulation.</text>
</comment>
<comment type="subunit">
    <text evidence="1">Interacts with dynactin subunit proteins, including DCTN4, DCTN5 and DCTN5.</text>
</comment>
<comment type="alternative products">
    <event type="alternative splicing"/>
    <isoform>
        <id>Q5TBK1-1</id>
        <name>1</name>
        <sequence type="displayed"/>
    </isoform>
    <isoform>
        <id>Q5TBK1-2</id>
        <name>2</name>
        <sequence type="described" ref="VSP_031319"/>
    </isoform>
</comment>
<comment type="induction">
    <text evidence="1">Up-regulated by USF1. Up-regulated by FOXO1.</text>
</comment>
<organism>
    <name type="scientific">Homo sapiens</name>
    <name type="common">Human</name>
    <dbReference type="NCBI Taxonomy" id="9606"/>
    <lineage>
        <taxon>Eukaryota</taxon>
        <taxon>Metazoa</taxon>
        <taxon>Chordata</taxon>
        <taxon>Craniata</taxon>
        <taxon>Vertebrata</taxon>
        <taxon>Euteleostomi</taxon>
        <taxon>Mammalia</taxon>
        <taxon>Eutheria</taxon>
        <taxon>Euarchontoglires</taxon>
        <taxon>Primates</taxon>
        <taxon>Haplorrhini</taxon>
        <taxon>Catarrhini</taxon>
        <taxon>Hominidae</taxon>
        <taxon>Homo</taxon>
    </lineage>
</organism>
<protein>
    <recommendedName>
        <fullName>NEDD4-binding protein 2-like 1</fullName>
    </recommendedName>
</protein>
<dbReference type="EMBL" id="AL137247">
    <property type="status" value="NOT_ANNOTATED_CDS"/>
    <property type="molecule type" value="Genomic_DNA"/>
</dbReference>
<dbReference type="EMBL" id="CH471075">
    <property type="protein sequence ID" value="EAX08502.1"/>
    <property type="molecule type" value="Genomic_DNA"/>
</dbReference>
<dbReference type="EMBL" id="CH471075">
    <property type="protein sequence ID" value="EAX08503.1"/>
    <property type="molecule type" value="Genomic_DNA"/>
</dbReference>
<dbReference type="EMBL" id="BC125050">
    <property type="protein sequence ID" value="AAI25051.1"/>
    <property type="molecule type" value="mRNA"/>
</dbReference>
<dbReference type="CCDS" id="CCDS41877.1">
    <molecule id="Q5TBK1-2"/>
</dbReference>
<dbReference type="CCDS" id="CCDS9345.2">
    <molecule id="Q5TBK1-1"/>
</dbReference>
<dbReference type="RefSeq" id="NP_001073159.1">
    <molecule id="Q5TBK1-2"/>
    <property type="nucleotide sequence ID" value="NM_001079691.2"/>
</dbReference>
<dbReference type="RefSeq" id="NP_001273388.1">
    <molecule id="Q5TBK1-1"/>
    <property type="nucleotide sequence ID" value="NM_001286459.2"/>
</dbReference>
<dbReference type="RefSeq" id="NP_438169.2">
    <molecule id="Q5TBK1-1"/>
    <property type="nucleotide sequence ID" value="NM_052818.3"/>
</dbReference>
<dbReference type="SMR" id="Q5TBK1"/>
<dbReference type="BioGRID" id="124746">
    <property type="interactions" value="7"/>
</dbReference>
<dbReference type="FunCoup" id="Q5TBK1">
    <property type="interactions" value="24"/>
</dbReference>
<dbReference type="IntAct" id="Q5TBK1">
    <property type="interactions" value="6"/>
</dbReference>
<dbReference type="STRING" id="9606.ENSP00000369473"/>
<dbReference type="iPTMnet" id="Q5TBK1"/>
<dbReference type="PhosphoSitePlus" id="Q5TBK1"/>
<dbReference type="BioMuta" id="N4BP2L1"/>
<dbReference type="DMDM" id="74745960"/>
<dbReference type="MassIVE" id="Q5TBK1"/>
<dbReference type="PaxDb" id="9606-ENSP00000369473"/>
<dbReference type="PeptideAtlas" id="Q5TBK1"/>
<dbReference type="ProteomicsDB" id="64917">
    <molecule id="Q5TBK1-1"/>
</dbReference>
<dbReference type="ProteomicsDB" id="64918">
    <molecule id="Q5TBK1-2"/>
</dbReference>
<dbReference type="Antibodypedia" id="49139">
    <property type="antibodies" value="36 antibodies from 15 providers"/>
</dbReference>
<dbReference type="DNASU" id="90634"/>
<dbReference type="Ensembl" id="ENST00000380130.7">
    <molecule id="Q5TBK1-1"/>
    <property type="protein sequence ID" value="ENSP00000369473.2"/>
    <property type="gene ID" value="ENSG00000139597.18"/>
</dbReference>
<dbReference type="Ensembl" id="ENST00000380133.6">
    <molecule id="Q5TBK1-1"/>
    <property type="protein sequence ID" value="ENSP00000369476.2"/>
    <property type="gene ID" value="ENSG00000139597.18"/>
</dbReference>
<dbReference type="Ensembl" id="ENST00000380139.8">
    <molecule id="Q5TBK1-2"/>
    <property type="protein sequence ID" value="ENSP00000369484.3"/>
    <property type="gene ID" value="ENSG00000139597.18"/>
</dbReference>
<dbReference type="Ensembl" id="ENST00000613078.4">
    <molecule id="Q5TBK1-2"/>
    <property type="protein sequence ID" value="ENSP00000483310.1"/>
    <property type="gene ID" value="ENSG00000139597.18"/>
</dbReference>
<dbReference type="GeneID" id="90634"/>
<dbReference type="KEGG" id="hsa:90634"/>
<dbReference type="MANE-Select" id="ENST00000380130.7">
    <property type="protein sequence ID" value="ENSP00000369473.2"/>
    <property type="RefSeq nucleotide sequence ID" value="NM_052818.3"/>
    <property type="RefSeq protein sequence ID" value="NP_438169.2"/>
</dbReference>
<dbReference type="UCSC" id="uc001uuc.4">
    <molecule id="Q5TBK1-1"/>
    <property type="organism name" value="human"/>
</dbReference>
<dbReference type="AGR" id="HGNC:25037"/>
<dbReference type="CTD" id="90634"/>
<dbReference type="DisGeNET" id="90634"/>
<dbReference type="GeneCards" id="N4BP2L1"/>
<dbReference type="HGNC" id="HGNC:25037">
    <property type="gene designation" value="N4BP2L1"/>
</dbReference>
<dbReference type="HPA" id="ENSG00000139597">
    <property type="expression patterns" value="Low tissue specificity"/>
</dbReference>
<dbReference type="MIM" id="621053">
    <property type="type" value="gene"/>
</dbReference>
<dbReference type="neXtProt" id="NX_Q5TBK1"/>
<dbReference type="OpenTargets" id="ENSG00000139597"/>
<dbReference type="PharmGKB" id="PA162396617"/>
<dbReference type="VEuPathDB" id="HostDB:ENSG00000139597"/>
<dbReference type="eggNOG" id="KOG2401">
    <property type="taxonomic scope" value="Eukaryota"/>
</dbReference>
<dbReference type="GeneTree" id="ENSGT00940000161564"/>
<dbReference type="HOGENOM" id="CLU_083043_1_1_1"/>
<dbReference type="InParanoid" id="Q5TBK1"/>
<dbReference type="OMA" id="GYWNTYS"/>
<dbReference type="OrthoDB" id="3231855at2759"/>
<dbReference type="PAN-GO" id="Q5TBK1">
    <property type="GO annotations" value="0 GO annotations based on evolutionary models"/>
</dbReference>
<dbReference type="PhylomeDB" id="Q5TBK1"/>
<dbReference type="PathwayCommons" id="Q5TBK1"/>
<dbReference type="BioGRID-ORCS" id="90634">
    <property type="hits" value="7 hits in 1147 CRISPR screens"/>
</dbReference>
<dbReference type="ChiTaRS" id="N4BP2L1">
    <property type="organism name" value="human"/>
</dbReference>
<dbReference type="GenomeRNAi" id="90634"/>
<dbReference type="Pharos" id="Q5TBK1">
    <property type="development level" value="Tdark"/>
</dbReference>
<dbReference type="PRO" id="PR:Q5TBK1"/>
<dbReference type="Proteomes" id="UP000005640">
    <property type="component" value="Chromosome 13"/>
</dbReference>
<dbReference type="RNAct" id="Q5TBK1">
    <property type="molecule type" value="protein"/>
</dbReference>
<dbReference type="Bgee" id="ENSG00000139597">
    <property type="expression patterns" value="Expressed in right lobe of liver and 202 other cell types or tissues"/>
</dbReference>
<dbReference type="ExpressionAtlas" id="Q5TBK1">
    <property type="expression patterns" value="baseline and differential"/>
</dbReference>
<dbReference type="Gene3D" id="3.40.50.300">
    <property type="entry name" value="P-loop containing nucleotide triphosphate hydrolases"/>
    <property type="match status" value="1"/>
</dbReference>
<dbReference type="InterPro" id="IPR026302">
    <property type="entry name" value="NEDD4-bd_p2"/>
</dbReference>
<dbReference type="InterPro" id="IPR027417">
    <property type="entry name" value="P-loop_NTPase"/>
</dbReference>
<dbReference type="PANTHER" id="PTHR13308">
    <property type="entry name" value="NEDD4-BINDING PROTEIN 2-LIKE 1"/>
    <property type="match status" value="1"/>
</dbReference>
<dbReference type="PANTHER" id="PTHR13308:SF5">
    <property type="entry name" value="NEDD4-BINDING PROTEIN 2-LIKE 1"/>
    <property type="match status" value="1"/>
</dbReference>
<dbReference type="Pfam" id="PF13671">
    <property type="entry name" value="AAA_33"/>
    <property type="match status" value="1"/>
</dbReference>
<dbReference type="SUPFAM" id="SSF52540">
    <property type="entry name" value="P-loop containing nucleoside triphosphate hydrolases"/>
    <property type="match status" value="1"/>
</dbReference>
<name>N42L1_HUMAN</name>
<sequence>MEDSFLQSFGRLSLQPQQQQQRQRPPRPPPRGTPPRRHSFRKHLYLLRGLPGSGKTTLARQLQHDFPRALIFSTDDFFFREDGAYEFNPDFLEEAHEWNQKRARKAMRNGISPIIIDNTNLHAWEMKPYAVMALENNYEVIFREPDTRWKFNVQELARRNIHGVSREKIHRMKERYEHDVTFHSVLHAEKPSRMNRNQDRNNALPSNNARYWNSYTEFPNRRAHGGFTNESSYHRRGGCHHGY</sequence>
<reference key="1">
    <citation type="journal article" date="2004" name="Nature">
        <title>The DNA sequence and analysis of human chromosome 13.</title>
        <authorList>
            <person name="Dunham A."/>
            <person name="Matthews L.H."/>
            <person name="Burton J."/>
            <person name="Ashurst J.L."/>
            <person name="Howe K.L."/>
            <person name="Ashcroft K.J."/>
            <person name="Beare D.M."/>
            <person name="Burford D.C."/>
            <person name="Hunt S.E."/>
            <person name="Griffiths-Jones S."/>
            <person name="Jones M.C."/>
            <person name="Keenan S.J."/>
            <person name="Oliver K."/>
            <person name="Scott C.E."/>
            <person name="Ainscough R."/>
            <person name="Almeida J.P."/>
            <person name="Ambrose K.D."/>
            <person name="Andrews D.T."/>
            <person name="Ashwell R.I.S."/>
            <person name="Babbage A.K."/>
            <person name="Bagguley C.L."/>
            <person name="Bailey J."/>
            <person name="Bannerjee R."/>
            <person name="Barlow K.F."/>
            <person name="Bates K."/>
            <person name="Beasley H."/>
            <person name="Bird C.P."/>
            <person name="Bray-Allen S."/>
            <person name="Brown A.J."/>
            <person name="Brown J.Y."/>
            <person name="Burrill W."/>
            <person name="Carder C."/>
            <person name="Carter N.P."/>
            <person name="Chapman J.C."/>
            <person name="Clamp M.E."/>
            <person name="Clark S.Y."/>
            <person name="Clarke G."/>
            <person name="Clee C.M."/>
            <person name="Clegg S.C."/>
            <person name="Cobley V."/>
            <person name="Collins J.E."/>
            <person name="Corby N."/>
            <person name="Coville G.J."/>
            <person name="Deloukas P."/>
            <person name="Dhami P."/>
            <person name="Dunham I."/>
            <person name="Dunn M."/>
            <person name="Earthrowl M.E."/>
            <person name="Ellington A.G."/>
            <person name="Faulkner L."/>
            <person name="Frankish A.G."/>
            <person name="Frankland J."/>
            <person name="French L."/>
            <person name="Garner P."/>
            <person name="Garnett J."/>
            <person name="Gilbert J.G.R."/>
            <person name="Gilson C.J."/>
            <person name="Ghori J."/>
            <person name="Grafham D.V."/>
            <person name="Gribble S.M."/>
            <person name="Griffiths C."/>
            <person name="Hall R.E."/>
            <person name="Hammond S."/>
            <person name="Harley J.L."/>
            <person name="Hart E.A."/>
            <person name="Heath P.D."/>
            <person name="Howden P.J."/>
            <person name="Huckle E.J."/>
            <person name="Hunt P.J."/>
            <person name="Hunt A.R."/>
            <person name="Johnson C."/>
            <person name="Johnson D."/>
            <person name="Kay M."/>
            <person name="Kimberley A.M."/>
            <person name="King A."/>
            <person name="Laird G.K."/>
            <person name="Langford C.J."/>
            <person name="Lawlor S."/>
            <person name="Leongamornlert D.A."/>
            <person name="Lloyd D.M."/>
            <person name="Lloyd C."/>
            <person name="Loveland J.E."/>
            <person name="Lovell J."/>
            <person name="Martin S."/>
            <person name="Mashreghi-Mohammadi M."/>
            <person name="McLaren S.J."/>
            <person name="McMurray A."/>
            <person name="Milne S."/>
            <person name="Moore M.J.F."/>
            <person name="Nickerson T."/>
            <person name="Palmer S.A."/>
            <person name="Pearce A.V."/>
            <person name="Peck A.I."/>
            <person name="Pelan S."/>
            <person name="Phillimore B."/>
            <person name="Porter K.M."/>
            <person name="Rice C.M."/>
            <person name="Searle S."/>
            <person name="Sehra H.K."/>
            <person name="Shownkeen R."/>
            <person name="Skuce C.D."/>
            <person name="Smith M."/>
            <person name="Steward C.A."/>
            <person name="Sycamore N."/>
            <person name="Tester J."/>
            <person name="Thomas D.W."/>
            <person name="Tracey A."/>
            <person name="Tromans A."/>
            <person name="Tubby B."/>
            <person name="Wall M."/>
            <person name="Wallis J.M."/>
            <person name="West A.P."/>
            <person name="Whitehead S.L."/>
            <person name="Willey D.L."/>
            <person name="Wilming L."/>
            <person name="Wray P.W."/>
            <person name="Wright M.W."/>
            <person name="Young L."/>
            <person name="Coulson A."/>
            <person name="Durbin R.M."/>
            <person name="Hubbard T."/>
            <person name="Sulston J.E."/>
            <person name="Beck S."/>
            <person name="Bentley D.R."/>
            <person name="Rogers J."/>
            <person name="Ross M.T."/>
        </authorList>
    </citation>
    <scope>NUCLEOTIDE SEQUENCE [LARGE SCALE GENOMIC DNA]</scope>
</reference>
<reference key="2">
    <citation type="submission" date="2005-07" db="EMBL/GenBank/DDBJ databases">
        <authorList>
            <person name="Mural R.J."/>
            <person name="Istrail S."/>
            <person name="Sutton G.G."/>
            <person name="Florea L."/>
            <person name="Halpern A.L."/>
            <person name="Mobarry C.M."/>
            <person name="Lippert R."/>
            <person name="Walenz B."/>
            <person name="Shatkay H."/>
            <person name="Dew I."/>
            <person name="Miller J.R."/>
            <person name="Flanigan M.J."/>
            <person name="Edwards N.J."/>
            <person name="Bolanos R."/>
            <person name="Fasulo D."/>
            <person name="Halldorsson B.V."/>
            <person name="Hannenhalli S."/>
            <person name="Turner R."/>
            <person name="Yooseph S."/>
            <person name="Lu F."/>
            <person name="Nusskern D.R."/>
            <person name="Shue B.C."/>
            <person name="Zheng X.H."/>
            <person name="Zhong F."/>
            <person name="Delcher A.L."/>
            <person name="Huson D.H."/>
            <person name="Kravitz S.A."/>
            <person name="Mouchard L."/>
            <person name="Reinert K."/>
            <person name="Remington K.A."/>
            <person name="Clark A.G."/>
            <person name="Waterman M.S."/>
            <person name="Eichler E.E."/>
            <person name="Adams M.D."/>
            <person name="Hunkapiller M.W."/>
            <person name="Myers E.W."/>
            <person name="Venter J.C."/>
        </authorList>
    </citation>
    <scope>NUCLEOTIDE SEQUENCE [LARGE SCALE GENOMIC DNA]</scope>
</reference>
<reference key="3">
    <citation type="journal article" date="2004" name="Genome Res.">
        <title>The status, quality, and expansion of the NIH full-length cDNA project: the Mammalian Gene Collection (MGC).</title>
        <authorList>
            <consortium name="The MGC Project Team"/>
        </authorList>
    </citation>
    <scope>NUCLEOTIDE SEQUENCE [LARGE SCALE MRNA] OF 80-243 (ISOFORM 1)</scope>
</reference>
<keyword id="KW-0025">Alternative splicing</keyword>
<keyword id="KW-0217">Developmental protein</keyword>
<keyword id="KW-1267">Proteomics identification</keyword>
<keyword id="KW-1185">Reference proteome</keyword>
<proteinExistence type="evidence at protein level"/>
<feature type="chain" id="PRO_0000318958" description="NEDD4-binding protein 2-like 1">
    <location>
        <begin position="1"/>
        <end position="243"/>
    </location>
</feature>
<feature type="region of interest" description="Disordered" evidence="2">
    <location>
        <begin position="1"/>
        <end position="38"/>
    </location>
</feature>
<feature type="splice variant" id="VSP_031319" description="In isoform 2." evidence="3">
    <original>ALENNYEVIFREPDTRWKFNVQELARRNIHGVSREKIHRMKERYEHDVTFHSVLHAEKPSRMNRNQDRNNALPSNNARYWNSYTEFPNRRAHGGFTNESSYHRRGGCHHGY</original>
    <variation>VFQTEQKNLFRLEMDMVVFRPEMKKHSWCLKRKNPPNERTV</variation>
    <location>
        <begin position="133"/>
        <end position="243"/>
    </location>
</feature>
<evidence type="ECO:0000250" key="1">
    <source>
        <dbReference type="UniProtKB" id="Q3V2Q8"/>
    </source>
</evidence>
<evidence type="ECO:0000256" key="2">
    <source>
        <dbReference type="SAM" id="MobiDB-lite"/>
    </source>
</evidence>
<evidence type="ECO:0000305" key="3"/>